<reference key="1">
    <citation type="journal article" date="2008" name="Genomics">
        <title>Evolution in the laboratory: the genome of Halobacterium salinarum strain R1 compared to that of strain NRC-1.</title>
        <authorList>
            <person name="Pfeiffer F."/>
            <person name="Schuster S.C."/>
            <person name="Broicher A."/>
            <person name="Falb M."/>
            <person name="Palm P."/>
            <person name="Rodewald K."/>
            <person name="Ruepp A."/>
            <person name="Soppa J."/>
            <person name="Tittor J."/>
            <person name="Oesterhelt D."/>
        </authorList>
    </citation>
    <scope>NUCLEOTIDE SEQUENCE [LARGE SCALE GENOMIC DNA]</scope>
    <source>
        <strain>ATCC 29341 / DSM 671 / R1</strain>
    </source>
</reference>
<protein>
    <recommendedName>
        <fullName evidence="1">Small ribosomal subunit protein uS19</fullName>
    </recommendedName>
    <alternativeName>
        <fullName evidence="3">30S ribosomal protein S19</fullName>
    </alternativeName>
</protein>
<feature type="chain" id="PRO_1000127985" description="Small ribosomal subunit protein uS19">
    <location>
        <begin position="1"/>
        <end position="140"/>
    </location>
</feature>
<feature type="region of interest" description="Disordered" evidence="2">
    <location>
        <begin position="55"/>
        <end position="74"/>
    </location>
</feature>
<gene>
    <name evidence="1" type="primary">rps19</name>
    <name type="ordered locus">OE_3393F</name>
</gene>
<evidence type="ECO:0000255" key="1">
    <source>
        <dbReference type="HAMAP-Rule" id="MF_00531"/>
    </source>
</evidence>
<evidence type="ECO:0000256" key="2">
    <source>
        <dbReference type="SAM" id="MobiDB-lite"/>
    </source>
</evidence>
<evidence type="ECO:0000305" key="3"/>
<proteinExistence type="inferred from homology"/>
<keyword id="KW-0687">Ribonucleoprotein</keyword>
<keyword id="KW-0689">Ribosomal protein</keyword>
<keyword id="KW-0694">RNA-binding</keyword>
<keyword id="KW-0699">rRNA-binding</keyword>
<organism>
    <name type="scientific">Halobacterium salinarum (strain ATCC 29341 / DSM 671 / R1)</name>
    <dbReference type="NCBI Taxonomy" id="478009"/>
    <lineage>
        <taxon>Archaea</taxon>
        <taxon>Methanobacteriati</taxon>
        <taxon>Methanobacteriota</taxon>
        <taxon>Stenosarchaea group</taxon>
        <taxon>Halobacteria</taxon>
        <taxon>Halobacteriales</taxon>
        <taxon>Halobacteriaceae</taxon>
        <taxon>Halobacterium</taxon>
        <taxon>Halobacterium salinarum NRC-34001</taxon>
    </lineage>
</organism>
<comment type="function">
    <text evidence="1">Protein S19 forms a complex with S13 that binds strongly to the 16S ribosomal RNA.</text>
</comment>
<comment type="similarity">
    <text evidence="1">Belongs to the universal ribosomal protein uS19 family.</text>
</comment>
<dbReference type="EMBL" id="AM774415">
    <property type="protein sequence ID" value="CAP14229.1"/>
    <property type="molecule type" value="Genomic_DNA"/>
</dbReference>
<dbReference type="RefSeq" id="WP_010903238.1">
    <property type="nucleotide sequence ID" value="NC_010364.1"/>
</dbReference>
<dbReference type="SMR" id="B0R660"/>
<dbReference type="EnsemblBacteria" id="CAP14229">
    <property type="protein sequence ID" value="CAP14229"/>
    <property type="gene ID" value="OE_3393F"/>
</dbReference>
<dbReference type="KEGG" id="hsl:OE_3393F"/>
<dbReference type="HOGENOM" id="CLU_097347_1_0_2"/>
<dbReference type="PhylomeDB" id="B0R660"/>
<dbReference type="Proteomes" id="UP000001321">
    <property type="component" value="Chromosome"/>
</dbReference>
<dbReference type="GO" id="GO:0022627">
    <property type="term" value="C:cytosolic small ribosomal subunit"/>
    <property type="evidence" value="ECO:0007669"/>
    <property type="project" value="TreeGrafter"/>
</dbReference>
<dbReference type="GO" id="GO:0019843">
    <property type="term" value="F:rRNA binding"/>
    <property type="evidence" value="ECO:0007669"/>
    <property type="project" value="UniProtKB-UniRule"/>
</dbReference>
<dbReference type="GO" id="GO:0003735">
    <property type="term" value="F:structural constituent of ribosome"/>
    <property type="evidence" value="ECO:0007669"/>
    <property type="project" value="InterPro"/>
</dbReference>
<dbReference type="GO" id="GO:0000028">
    <property type="term" value="P:ribosomal small subunit assembly"/>
    <property type="evidence" value="ECO:0007669"/>
    <property type="project" value="TreeGrafter"/>
</dbReference>
<dbReference type="GO" id="GO:0006412">
    <property type="term" value="P:translation"/>
    <property type="evidence" value="ECO:0007669"/>
    <property type="project" value="UniProtKB-UniRule"/>
</dbReference>
<dbReference type="FunFam" id="3.30.860.10:FF:000002">
    <property type="entry name" value="40S ribosomal protein S15"/>
    <property type="match status" value="1"/>
</dbReference>
<dbReference type="Gene3D" id="3.30.860.10">
    <property type="entry name" value="30s Ribosomal Protein S19, Chain A"/>
    <property type="match status" value="1"/>
</dbReference>
<dbReference type="HAMAP" id="MF_00531">
    <property type="entry name" value="Ribosomal_uS19"/>
    <property type="match status" value="1"/>
</dbReference>
<dbReference type="InterPro" id="IPR002222">
    <property type="entry name" value="Ribosomal_uS19"/>
</dbReference>
<dbReference type="InterPro" id="IPR020934">
    <property type="entry name" value="Ribosomal_uS19_CS"/>
</dbReference>
<dbReference type="InterPro" id="IPR005713">
    <property type="entry name" value="Ribosomal_uS19_euk/arc"/>
</dbReference>
<dbReference type="InterPro" id="IPR023575">
    <property type="entry name" value="Ribosomal_uS19_SF"/>
</dbReference>
<dbReference type="NCBIfam" id="NF003121">
    <property type="entry name" value="PRK04038.1"/>
    <property type="match status" value="1"/>
</dbReference>
<dbReference type="NCBIfam" id="TIGR01025">
    <property type="entry name" value="uS19_arch"/>
    <property type="match status" value="1"/>
</dbReference>
<dbReference type="PANTHER" id="PTHR11880">
    <property type="entry name" value="RIBOSOMAL PROTEIN S19P FAMILY MEMBER"/>
    <property type="match status" value="1"/>
</dbReference>
<dbReference type="PANTHER" id="PTHR11880:SF2">
    <property type="entry name" value="SMALL RIBOSOMAL SUBUNIT PROTEIN US19"/>
    <property type="match status" value="1"/>
</dbReference>
<dbReference type="Pfam" id="PF00203">
    <property type="entry name" value="Ribosomal_S19"/>
    <property type="match status" value="1"/>
</dbReference>
<dbReference type="PIRSF" id="PIRSF002144">
    <property type="entry name" value="Ribosomal_S19"/>
    <property type="match status" value="1"/>
</dbReference>
<dbReference type="PRINTS" id="PR00975">
    <property type="entry name" value="RIBOSOMALS19"/>
</dbReference>
<dbReference type="SUPFAM" id="SSF54570">
    <property type="entry name" value="Ribosomal protein S19"/>
    <property type="match status" value="1"/>
</dbReference>
<dbReference type="PROSITE" id="PS00323">
    <property type="entry name" value="RIBOSOMAL_S19"/>
    <property type="match status" value="1"/>
</dbReference>
<accession>B0R660</accession>
<sequence length="140" mass="15918">MSTEYRTGREGEFTYRGHDLDELQEMSLEDVAELLPARQRRTITRGLSEEHHKVLAEARESGTEETANNPIRTHLRDMPVLPEFVGLTFAVYTGQEFERVEVQPEMIGHYLGEFQLTRSSVEHGQAGIGATRSSKFVPLK</sequence>
<name>RS19_HALS3</name>